<dbReference type="EC" id="1.3.3.15" evidence="1"/>
<dbReference type="EMBL" id="AL123456">
    <property type="protein sequence ID" value="CCP45475.1"/>
    <property type="molecule type" value="Genomic_DNA"/>
</dbReference>
<dbReference type="RefSeq" id="WP_003413871.1">
    <property type="nucleotide sequence ID" value="NZ_NVQJ01000017.1"/>
</dbReference>
<dbReference type="RefSeq" id="YP_177675.1">
    <property type="nucleotide sequence ID" value="NC_000962.3"/>
</dbReference>
<dbReference type="SMR" id="P9WMP1"/>
<dbReference type="FunCoup" id="P9WMP1">
    <property type="interactions" value="439"/>
</dbReference>
<dbReference type="STRING" id="83332.Rv2677c"/>
<dbReference type="PaxDb" id="83332-Rv2677c"/>
<dbReference type="DNASU" id="887711"/>
<dbReference type="GeneID" id="887711"/>
<dbReference type="KEGG" id="mtu:Rv2677c"/>
<dbReference type="KEGG" id="mtv:RVBD_2677c"/>
<dbReference type="TubercuList" id="Rv2677c"/>
<dbReference type="eggNOG" id="COG1232">
    <property type="taxonomic scope" value="Bacteria"/>
</dbReference>
<dbReference type="InParanoid" id="P9WMP1"/>
<dbReference type="OrthoDB" id="4496419at2"/>
<dbReference type="PhylomeDB" id="P9WMP1"/>
<dbReference type="UniPathway" id="UPA00252"/>
<dbReference type="Proteomes" id="UP000001584">
    <property type="component" value="Chromosome"/>
</dbReference>
<dbReference type="GO" id="GO:0005737">
    <property type="term" value="C:cytoplasm"/>
    <property type="evidence" value="ECO:0007669"/>
    <property type="project" value="UniProtKB-SubCell"/>
</dbReference>
<dbReference type="GO" id="GO:0016491">
    <property type="term" value="F:oxidoreductase activity"/>
    <property type="evidence" value="ECO:0000318"/>
    <property type="project" value="GO_Central"/>
</dbReference>
<dbReference type="GO" id="GO:0004729">
    <property type="term" value="F:oxygen-dependent protoporphyrinogen oxidase activity"/>
    <property type="evidence" value="ECO:0007669"/>
    <property type="project" value="InterPro"/>
</dbReference>
<dbReference type="GO" id="GO:0006783">
    <property type="term" value="P:heme biosynthetic process"/>
    <property type="evidence" value="ECO:0007669"/>
    <property type="project" value="UniProtKB-KW"/>
</dbReference>
<dbReference type="Gene3D" id="3.50.50.60">
    <property type="entry name" value="FAD/NAD(P)-binding domain"/>
    <property type="match status" value="1"/>
</dbReference>
<dbReference type="Gene3D" id="1.10.3110.10">
    <property type="entry name" value="protoporphyrinogen ix oxidase, domain 3"/>
    <property type="match status" value="1"/>
</dbReference>
<dbReference type="Gene3D" id="3.90.660.20">
    <property type="entry name" value="Protoporphyrinogen oxidase, mitochondrial, domain 2"/>
    <property type="match status" value="1"/>
</dbReference>
<dbReference type="InterPro" id="IPR002937">
    <property type="entry name" value="Amino_oxidase"/>
</dbReference>
<dbReference type="InterPro" id="IPR036188">
    <property type="entry name" value="FAD/NAD-bd_sf"/>
</dbReference>
<dbReference type="InterPro" id="IPR004572">
    <property type="entry name" value="Protoporphyrinogen_oxidase"/>
</dbReference>
<dbReference type="InterPro" id="IPR050464">
    <property type="entry name" value="Zeta_carotene_desat/Oxidored"/>
</dbReference>
<dbReference type="NCBIfam" id="NF008841">
    <property type="entry name" value="PRK11883.1-1"/>
    <property type="match status" value="1"/>
</dbReference>
<dbReference type="NCBIfam" id="TIGR00562">
    <property type="entry name" value="proto_IX_ox"/>
    <property type="match status" value="1"/>
</dbReference>
<dbReference type="PANTHER" id="PTHR42923">
    <property type="entry name" value="PROTOPORPHYRINOGEN OXIDASE"/>
    <property type="match status" value="1"/>
</dbReference>
<dbReference type="PANTHER" id="PTHR42923:SF3">
    <property type="entry name" value="PROTOPORPHYRINOGEN OXIDASE"/>
    <property type="match status" value="1"/>
</dbReference>
<dbReference type="Pfam" id="PF01593">
    <property type="entry name" value="Amino_oxidase"/>
    <property type="match status" value="1"/>
</dbReference>
<dbReference type="SUPFAM" id="SSF54373">
    <property type="entry name" value="FAD-linked reductases, C-terminal domain"/>
    <property type="match status" value="1"/>
</dbReference>
<dbReference type="SUPFAM" id="SSF51905">
    <property type="entry name" value="FAD/NAD(P)-binding domain"/>
    <property type="match status" value="1"/>
</dbReference>
<protein>
    <recommendedName>
        <fullName evidence="5">Coproporphyrinogen III oxidase</fullName>
        <ecNumber evidence="1">1.3.3.15</ecNumber>
    </recommendedName>
</protein>
<evidence type="ECO:0000250" key="1">
    <source>
        <dbReference type="UniProtKB" id="P32397"/>
    </source>
</evidence>
<evidence type="ECO:0000250" key="2">
    <source>
        <dbReference type="UniProtKB" id="P56601"/>
    </source>
</evidence>
<evidence type="ECO:0000303" key="3">
    <source>
    </source>
</evidence>
<evidence type="ECO:0000303" key="4">
    <source>
    </source>
</evidence>
<evidence type="ECO:0000305" key="5"/>
<evidence type="ECO:0000305" key="6">
    <source>
    </source>
</evidence>
<keyword id="KW-0963">Cytoplasm</keyword>
<keyword id="KW-0274">FAD</keyword>
<keyword id="KW-0285">Flavoprotein</keyword>
<keyword id="KW-0350">Heme biosynthesis</keyword>
<keyword id="KW-0560">Oxidoreductase</keyword>
<keyword id="KW-1185">Reference proteome</keyword>
<sequence length="452" mass="46846">MTPRSYCVVGGGISGLTSAYRLRQAVGDDATITLFEPADRLGGVLRTEHIGGQPMDLGAEAFVLRRPEMPALLAELGLSDRQLASTGARPLIYSQQRLHPLPPQTVVGIPSSAGSMAGLVDDATLARIDAEAARPFTWQVGSDPAVADLVADRFGDQVVARSVDPLLSGVYAGSAATIGLRAAAPSVAAALDRGATSVTDAVRQALPPGSGGPVFGALDGGYQVLLDGLVRRSRVHWVRARVVQLERGWVLRDETGGRWQADAVILAVPAPRLARLVDGIAPRTHAAARQIVSASSAVVALAVPGGTAFPHCSGVLVAGDESPHAKAITLSSRKWGQRGDVALLRLSFGRFGDEPALTASDDQLLAWAADDLVTVFGVAVDPVDVRVRRWIEAMPQYGPGHADVVAELRAGLPPTLAVAGSYLDGIGVPACVGAAGRAVTSVIEALDAQVAR</sequence>
<organism>
    <name type="scientific">Mycobacterium tuberculosis (strain ATCC 25618 / H37Rv)</name>
    <dbReference type="NCBI Taxonomy" id="83332"/>
    <lineage>
        <taxon>Bacteria</taxon>
        <taxon>Bacillati</taxon>
        <taxon>Actinomycetota</taxon>
        <taxon>Actinomycetes</taxon>
        <taxon>Mycobacteriales</taxon>
        <taxon>Mycobacteriaceae</taxon>
        <taxon>Mycobacterium</taxon>
        <taxon>Mycobacterium tuberculosis complex</taxon>
    </lineage>
</organism>
<comment type="function">
    <text evidence="1">Involved in coproporphyrin-dependent heme b biosynthesis. Catalyzes the oxidation of coproporphyrinogen III to coproporphyrin III.</text>
</comment>
<comment type="catalytic activity">
    <reaction evidence="1">
        <text>coproporphyrinogen III + 3 O2 = coproporphyrin III + 3 H2O2</text>
        <dbReference type="Rhea" id="RHEA:43436"/>
        <dbReference type="ChEBI" id="CHEBI:15379"/>
        <dbReference type="ChEBI" id="CHEBI:16240"/>
        <dbReference type="ChEBI" id="CHEBI:57309"/>
        <dbReference type="ChEBI" id="CHEBI:131725"/>
        <dbReference type="EC" id="1.3.3.15"/>
    </reaction>
    <physiologicalReaction direction="left-to-right" evidence="1">
        <dbReference type="Rhea" id="RHEA:43437"/>
    </physiologicalReaction>
</comment>
<comment type="cofactor">
    <cofactor evidence="1">
        <name>FAD</name>
        <dbReference type="ChEBI" id="CHEBI:57692"/>
    </cofactor>
    <text evidence="1">Binds 1 FAD per subunit.</text>
</comment>
<comment type="pathway">
    <text evidence="6">Porphyrin-containing compound metabolism; protoheme biosynthesis.</text>
</comment>
<comment type="subcellular location">
    <subcellularLocation>
        <location evidence="1">Cytoplasm</location>
    </subcellularLocation>
</comment>
<comment type="similarity">
    <text evidence="5">Belongs to the protoporphyrinogen/coproporphyrinogen oxidase family. Coproporphyrinogen III oxidase subfamily.</text>
</comment>
<feature type="chain" id="PRO_0000135265" description="Coproporphyrinogen III oxidase">
    <location>
        <begin position="1"/>
        <end position="452"/>
    </location>
</feature>
<feature type="binding site" evidence="1">
    <location>
        <begin position="10"/>
        <end position="15"/>
    </location>
    <ligand>
        <name>FAD</name>
        <dbReference type="ChEBI" id="CHEBI:57692"/>
    </ligand>
</feature>
<feature type="binding site" evidence="1">
    <location>
        <begin position="36"/>
        <end position="37"/>
    </location>
    <ligand>
        <name>FAD</name>
        <dbReference type="ChEBI" id="CHEBI:57692"/>
    </ligand>
</feature>
<feature type="binding site" evidence="1">
    <location>
        <begin position="58"/>
        <end position="61"/>
    </location>
    <ligand>
        <name>FAD</name>
        <dbReference type="ChEBI" id="CHEBI:57692"/>
    </ligand>
</feature>
<feature type="binding site" evidence="2">
    <location>
        <position position="242"/>
    </location>
    <ligand>
        <name>FAD</name>
        <dbReference type="ChEBI" id="CHEBI:57692"/>
    </ligand>
</feature>
<feature type="binding site" evidence="1">
    <location>
        <position position="390"/>
    </location>
    <ligand>
        <name>FAD</name>
        <dbReference type="ChEBI" id="CHEBI:57692"/>
    </ligand>
</feature>
<feature type="binding site" evidence="1">
    <location>
        <begin position="426"/>
        <end position="428"/>
    </location>
    <ligand>
        <name>FAD</name>
        <dbReference type="ChEBI" id="CHEBI:57692"/>
    </ligand>
</feature>
<name>CGOX_MYCTU</name>
<accession>P9WMP1</accession>
<accession>L0TAB5</accession>
<accession>O53230</accession>
<accession>P0A5A7</accession>
<gene>
    <name evidence="4" type="primary">cgoX</name>
    <name evidence="3" type="synonym">hemY</name>
    <name type="ordered locus">Rv2677c</name>
    <name type="ORF">MTV010.01c</name>
</gene>
<reference key="1">
    <citation type="journal article" date="1998" name="Nature">
        <title>Deciphering the biology of Mycobacterium tuberculosis from the complete genome sequence.</title>
        <authorList>
            <person name="Cole S.T."/>
            <person name="Brosch R."/>
            <person name="Parkhill J."/>
            <person name="Garnier T."/>
            <person name="Churcher C.M."/>
            <person name="Harris D.E."/>
            <person name="Gordon S.V."/>
            <person name="Eiglmeier K."/>
            <person name="Gas S."/>
            <person name="Barry C.E. III"/>
            <person name="Tekaia F."/>
            <person name="Badcock K."/>
            <person name="Basham D."/>
            <person name="Brown D."/>
            <person name="Chillingworth T."/>
            <person name="Connor R."/>
            <person name="Davies R.M."/>
            <person name="Devlin K."/>
            <person name="Feltwell T."/>
            <person name="Gentles S."/>
            <person name="Hamlin N."/>
            <person name="Holroyd S."/>
            <person name="Hornsby T."/>
            <person name="Jagels K."/>
            <person name="Krogh A."/>
            <person name="McLean J."/>
            <person name="Moule S."/>
            <person name="Murphy L.D."/>
            <person name="Oliver S."/>
            <person name="Osborne J."/>
            <person name="Quail M.A."/>
            <person name="Rajandream M.A."/>
            <person name="Rogers J."/>
            <person name="Rutter S."/>
            <person name="Seeger K."/>
            <person name="Skelton S."/>
            <person name="Squares S."/>
            <person name="Squares R."/>
            <person name="Sulston J.E."/>
            <person name="Taylor K."/>
            <person name="Whitehead S."/>
            <person name="Barrell B.G."/>
        </authorList>
    </citation>
    <scope>NUCLEOTIDE SEQUENCE [LARGE SCALE GENOMIC DNA]</scope>
    <source>
        <strain>ATCC 25618 / H37Rv</strain>
    </source>
</reference>
<reference key="2">
    <citation type="journal article" date="2002" name="Microbiology">
        <title>Re-annotation of the genome sequence of Mycobacterium tuberculosis H37Rv.</title>
        <authorList>
            <person name="Camus J.-C."/>
            <person name="Pryor M.J."/>
            <person name="Medigue C."/>
            <person name="Cole S.T."/>
        </authorList>
    </citation>
    <scope>SEQUENCE REVISION</scope>
</reference>
<reference key="3">
    <citation type="journal article" date="2011" name="Mol. Cell. Proteomics">
        <title>Proteogenomic analysis of Mycobacterium tuberculosis by high resolution mass spectrometry.</title>
        <authorList>
            <person name="Kelkar D.S."/>
            <person name="Kumar D."/>
            <person name="Kumar P."/>
            <person name="Balakrishnan L."/>
            <person name="Muthusamy B."/>
            <person name="Yadav A.K."/>
            <person name="Shrivastava P."/>
            <person name="Marimuthu A."/>
            <person name="Anand S."/>
            <person name="Sundaram H."/>
            <person name="Kingsbury R."/>
            <person name="Harsha H.C."/>
            <person name="Nair B."/>
            <person name="Prasad T.S."/>
            <person name="Chauhan D.S."/>
            <person name="Katoch K."/>
            <person name="Katoch V.M."/>
            <person name="Kumar P."/>
            <person name="Chaerkady R."/>
            <person name="Ramachandran S."/>
            <person name="Dash D."/>
            <person name="Pandey A."/>
        </authorList>
    </citation>
    <scope>IDENTIFICATION BY MASS SPECTROMETRY [LARGE SCALE ANALYSIS]</scope>
    <source>
        <strain>ATCC 25618 / H37Rv</strain>
    </source>
</reference>
<reference key="4">
    <citation type="journal article" date="2015" name="Arch. Biochem. Biophys.">
        <title>HemQ: An iron-coproporphyrin oxidative decarboxylase for protoheme synthesis in Firmicutes and Actinobacteria.</title>
        <authorList>
            <person name="Dailey H.A."/>
            <person name="Gerdes S."/>
        </authorList>
    </citation>
    <scope>PATHWAY</scope>
    <scope>REVIEW</scope>
</reference>
<reference key="5">
    <citation type="journal article" date="2017" name="Microbiol. Mol. Biol. Rev.">
        <title>Prokaryotic heme biosynthesis: multiple pathways to a common essential product.</title>
        <authorList>
            <person name="Dailey H.A."/>
            <person name="Dailey T.A."/>
            <person name="Gerdes S."/>
            <person name="Jahn D."/>
            <person name="Jahn M."/>
            <person name="O'Brian M.R."/>
            <person name="Warren M.J."/>
        </authorList>
    </citation>
    <scope>NOMENCLATURE</scope>
    <scope>REVIEW</scope>
</reference>
<proteinExistence type="evidence at protein level"/>